<dbReference type="EC" id="1.10.3.9"/>
<dbReference type="EMBL" id="AY329638">
    <property type="protein sequence ID" value="AAP92670.1"/>
    <property type="molecule type" value="Genomic_DNA"/>
</dbReference>
<dbReference type="EMBL" id="AJ630128">
    <property type="protein sequence ID" value="CAF34244.1"/>
    <property type="molecule type" value="Genomic_DNA"/>
</dbReference>
<dbReference type="RefSeq" id="YP_195214.1">
    <property type="nucleotide sequence ID" value="NC_006820.1"/>
</dbReference>
<dbReference type="SMR" id="Q7Y4H2"/>
<dbReference type="GeneID" id="10100903"/>
<dbReference type="KEGG" id="vg:10100903"/>
<dbReference type="OrthoDB" id="3306at10239"/>
<dbReference type="Proteomes" id="UP000000994">
    <property type="component" value="Genome"/>
</dbReference>
<dbReference type="GO" id="GO:0044160">
    <property type="term" value="C:host thylakoid membrane"/>
    <property type="evidence" value="ECO:0007669"/>
    <property type="project" value="UniProtKB-SubCell"/>
</dbReference>
<dbReference type="GO" id="GO:0016020">
    <property type="term" value="C:membrane"/>
    <property type="evidence" value="ECO:0007669"/>
    <property type="project" value="UniProtKB-KW"/>
</dbReference>
<dbReference type="GO" id="GO:0016168">
    <property type="term" value="F:chlorophyll binding"/>
    <property type="evidence" value="ECO:0007669"/>
    <property type="project" value="UniProtKB-KW"/>
</dbReference>
<dbReference type="GO" id="GO:0045156">
    <property type="term" value="F:electron transporter, transferring electrons within the cyclic electron transport pathway of photosynthesis activity"/>
    <property type="evidence" value="ECO:0007669"/>
    <property type="project" value="InterPro"/>
</dbReference>
<dbReference type="GO" id="GO:0046872">
    <property type="term" value="F:metal ion binding"/>
    <property type="evidence" value="ECO:0007669"/>
    <property type="project" value="UniProtKB-KW"/>
</dbReference>
<dbReference type="GO" id="GO:0016491">
    <property type="term" value="F:oxidoreductase activity"/>
    <property type="evidence" value="ECO:0007669"/>
    <property type="project" value="UniProtKB-KW"/>
</dbReference>
<dbReference type="GO" id="GO:0009772">
    <property type="term" value="P:photosynthetic electron transport in photosystem II"/>
    <property type="evidence" value="ECO:0007669"/>
    <property type="project" value="InterPro"/>
</dbReference>
<dbReference type="FunFam" id="1.20.85.10:FF:000001">
    <property type="entry name" value="photosystem II D2 protein-like"/>
    <property type="match status" value="1"/>
</dbReference>
<dbReference type="Gene3D" id="1.20.85.10">
    <property type="entry name" value="Photosystem II protein D1-like"/>
    <property type="match status" value="1"/>
</dbReference>
<dbReference type="HAMAP" id="MF_01383">
    <property type="entry name" value="PSII_PsbD_D2"/>
    <property type="match status" value="1"/>
</dbReference>
<dbReference type="InterPro" id="IPR055266">
    <property type="entry name" value="D1/D2"/>
</dbReference>
<dbReference type="InterPro" id="IPR036854">
    <property type="entry name" value="Photo_II_D1/D2_sf"/>
</dbReference>
<dbReference type="InterPro" id="IPR000484">
    <property type="entry name" value="Photo_RC_L/M"/>
</dbReference>
<dbReference type="InterPro" id="IPR055265">
    <property type="entry name" value="Photo_RC_L/M_CS"/>
</dbReference>
<dbReference type="InterPro" id="IPR005868">
    <property type="entry name" value="PSII_PsbD/D2"/>
</dbReference>
<dbReference type="NCBIfam" id="TIGR01152">
    <property type="entry name" value="psbD"/>
    <property type="match status" value="1"/>
</dbReference>
<dbReference type="PANTHER" id="PTHR33149:SF12">
    <property type="entry name" value="PHOTOSYSTEM II D2 PROTEIN"/>
    <property type="match status" value="1"/>
</dbReference>
<dbReference type="PANTHER" id="PTHR33149">
    <property type="entry name" value="PHOTOSYSTEM II PROTEIN D1"/>
    <property type="match status" value="1"/>
</dbReference>
<dbReference type="Pfam" id="PF00124">
    <property type="entry name" value="Photo_RC"/>
    <property type="match status" value="1"/>
</dbReference>
<dbReference type="PRINTS" id="PR00256">
    <property type="entry name" value="REACTNCENTRE"/>
</dbReference>
<dbReference type="SUPFAM" id="SSF81483">
    <property type="entry name" value="Bacterial photosystem II reaction centre, L and M subunits"/>
    <property type="match status" value="1"/>
</dbReference>
<dbReference type="PROSITE" id="PS00244">
    <property type="entry name" value="REACTION_CENTER"/>
    <property type="match status" value="1"/>
</dbReference>
<keyword id="KW-0148">Chlorophyll</keyword>
<keyword id="KW-0157">Chromophore</keyword>
<keyword id="KW-0249">Electron transport</keyword>
<keyword id="KW-1043">Host membrane</keyword>
<keyword id="KW-1050">Host thylakoid</keyword>
<keyword id="KW-0408">Iron</keyword>
<keyword id="KW-0460">Magnesium</keyword>
<keyword id="KW-0472">Membrane</keyword>
<keyword id="KW-0479">Metal-binding</keyword>
<keyword id="KW-0560">Oxidoreductase</keyword>
<keyword id="KW-0602">Photosynthesis</keyword>
<keyword id="KW-0604">Photosystem II</keyword>
<keyword id="KW-0812">Transmembrane</keyword>
<keyword id="KW-1133">Transmembrane helix</keyword>
<keyword id="KW-0813">Transport</keyword>
<gene>
    <name type="primary">psbD</name>
</gene>
<protein>
    <recommendedName>
        <fullName>Photosystem II D2 protein</fullName>
        <shortName>PSII D2 protein</shortName>
        <ecNumber>1.10.3.9</ecNumber>
    </recommendedName>
    <alternativeName>
        <fullName>Photosystem Q(A) protein</fullName>
    </alternativeName>
</protein>
<organism>
    <name type="scientific">Synechococcus phage S-PM2</name>
    <dbReference type="NCBI Taxonomy" id="238854"/>
    <lineage>
        <taxon>Viruses</taxon>
        <taxon>Duplodnaviria</taxon>
        <taxon>Heunggongvirae</taxon>
        <taxon>Uroviricota</taxon>
        <taxon>Caudoviricetes</taxon>
        <taxon>Kyanoviridae</taxon>
        <taxon>Nodensvirus</taxon>
        <taxon>Nodensvirus spm2</taxon>
    </lineage>
</organism>
<comment type="function">
    <text evidence="1">Photosystem II (PSII) is a light-driven water:plastoquinone oxidoreductase that uses light energy to abstract electrons from H(2)O, generating O(2) and a proton gradient subsequently used for ATP formation. It consists of a core antenna complex that captures photons, and an electron transfer chain that converts photonic excitation into a charge separation. The D1/D2 (PsbA/PsbD) reaction center heterodimer binds P680, the primary electron donor of PSII as well as several subsequent electron acceptors. D2 is needed for assembly of a stable PSII complex.</text>
</comment>
<comment type="catalytic activity">
    <reaction evidence="1">
        <text>2 a plastoquinone + 4 hnu + 2 H2O = 2 a plastoquinol + O2</text>
        <dbReference type="Rhea" id="RHEA:36359"/>
        <dbReference type="Rhea" id="RHEA-COMP:9561"/>
        <dbReference type="Rhea" id="RHEA-COMP:9562"/>
        <dbReference type="ChEBI" id="CHEBI:15377"/>
        <dbReference type="ChEBI" id="CHEBI:15379"/>
        <dbReference type="ChEBI" id="CHEBI:17757"/>
        <dbReference type="ChEBI" id="CHEBI:30212"/>
        <dbReference type="ChEBI" id="CHEBI:62192"/>
        <dbReference type="EC" id="1.10.3.9"/>
    </reaction>
</comment>
<comment type="cofactor">
    <text evidence="1">The D1/D2 heterodimer binds P680, chlorophylls that are the primary electron donor of PSII, and subsequent electron acceptors. It shares a non-heme iron and each subunit binds pheophytin, quinone, additional chlorophylls, carotenoids and lipids. There is also a Cl(-1) ion associated with D1 and D2, which is required for oxygen evolution. The PSII complex binds additional chlorophylls, carotenoids and specific lipids.</text>
</comment>
<comment type="subunit">
    <text evidence="1">PSII is composed of 1 copy each of membrane proteins PsbA, PsbB, PsbC, PsbD, PsbE, PsbF, PsbH, PsbI, PsbJ, PsbK, PsbL, PsbM, PsbT, PsbX, PsbY, PsbZ, Psb30/Ycf12, peripheral proteins PsbO, CyanoQ (PsbQ), PsbU, PsbV and a large number of cofactors. It forms dimeric complexes.</text>
</comment>
<comment type="subcellular location">
    <subcellularLocation>
        <location evidence="2">Host cellular thylakoid membrane</location>
        <topology evidence="2">Multi-pass membrane protein</topology>
    </subcellularLocation>
</comment>
<comment type="similarity">
    <text evidence="1">Belongs to the reaction center PufL/M/PsbA/D family.</text>
</comment>
<evidence type="ECO:0000250" key="1">
    <source>
        <dbReference type="UniProtKB" id="D0VWR8"/>
    </source>
</evidence>
<evidence type="ECO:0000305" key="2"/>
<feature type="chain" id="PRO_0000359710" description="Photosystem II D2 protein">
    <location>
        <begin position="1"/>
        <end position="353"/>
    </location>
</feature>
<feature type="transmembrane region" description="Helical" evidence="1">
    <location>
        <begin position="41"/>
        <end position="61"/>
    </location>
</feature>
<feature type="transmembrane region" description="Helical" evidence="1">
    <location>
        <begin position="125"/>
        <end position="141"/>
    </location>
</feature>
<feature type="transmembrane region" description="Helical" evidence="1">
    <location>
        <begin position="153"/>
        <end position="166"/>
    </location>
</feature>
<feature type="transmembrane region" description="Helical" evidence="1">
    <location>
        <begin position="208"/>
        <end position="228"/>
    </location>
</feature>
<feature type="transmembrane region" description="Helical" evidence="1">
    <location>
        <begin position="279"/>
        <end position="295"/>
    </location>
</feature>
<feature type="binding site" description="axial binding residue" evidence="1">
    <location>
        <position position="118"/>
    </location>
    <ligand>
        <name>chlorophyll a</name>
        <dbReference type="ChEBI" id="CHEBI:58416"/>
        <label>ChlzD2</label>
    </ligand>
    <ligandPart>
        <name>Mg</name>
        <dbReference type="ChEBI" id="CHEBI:25107"/>
    </ligandPart>
</feature>
<feature type="binding site" evidence="1">
    <location>
        <position position="130"/>
    </location>
    <ligand>
        <name>pheophytin a</name>
        <dbReference type="ChEBI" id="CHEBI:136840"/>
        <label>D2</label>
    </ligand>
</feature>
<feature type="binding site" evidence="1">
    <location>
        <position position="143"/>
    </location>
    <ligand>
        <name>pheophytin a</name>
        <dbReference type="ChEBI" id="CHEBI:136840"/>
        <label>D2</label>
    </ligand>
</feature>
<feature type="binding site" description="axial binding residue" evidence="1">
    <location>
        <position position="198"/>
    </location>
    <ligand>
        <name>chlorophyll a</name>
        <dbReference type="ChEBI" id="CHEBI:58416"/>
        <label>PD2</label>
    </ligand>
    <ligandPart>
        <name>Mg</name>
        <dbReference type="ChEBI" id="CHEBI:25107"/>
    </ligandPart>
</feature>
<feature type="binding site" evidence="1">
    <location>
        <position position="215"/>
    </location>
    <ligand>
        <name>a plastoquinone</name>
        <dbReference type="ChEBI" id="CHEBI:17757"/>
        <label>Q(A)</label>
    </ligand>
</feature>
<feature type="binding site" evidence="1">
    <location>
        <position position="215"/>
    </location>
    <ligand>
        <name>Fe cation</name>
        <dbReference type="ChEBI" id="CHEBI:24875"/>
        <note>ligand shared with heterodimeric partner</note>
    </ligand>
</feature>
<feature type="binding site" evidence="1">
    <location>
        <position position="262"/>
    </location>
    <ligand>
        <name>a plastoquinone</name>
        <dbReference type="ChEBI" id="CHEBI:17757"/>
        <label>Q(A)</label>
    </ligand>
</feature>
<feature type="binding site" evidence="1">
    <location>
        <position position="269"/>
    </location>
    <ligand>
        <name>Fe cation</name>
        <dbReference type="ChEBI" id="CHEBI:24875"/>
        <note>ligand shared with heterodimeric partner</note>
    </ligand>
</feature>
<organismHost>
    <name type="scientific">Synechococcus</name>
    <dbReference type="NCBI Taxonomy" id="1129"/>
</organismHost>
<sequence length="353" mass="39693">MTSSTLSQPIKQRGWFDVLDDWIKRDRFVFVGWSGLLLFPTAYLALGGWLTGTTFVTSWYTHGLASSYLEGANFLTAAVSTPADAMGHSLLLLWGPESQGDIVRWFQLGGLWTFVALHGAFSLIGFMLRQFEISRLVGIRPYNAIAFSGPIAVFVSVFLMYPLGQSSWFFAPSFGVAAIFRFLLFLQGFHNWTLNPFHMMGVAGILGGALLCAIHGATVENTLYEDGEQSNTFKAFEPTQEEETYSMVTANRYWSQIFGIAFSNKRWLHFFMLFVPVMGLWTSSIGIIGLALNLRAYDFVSQEIRAAEDPEFETFYTKNILLNEGLRAWMAPVDQPHENFVFPEEVLPRGNAL</sequence>
<accession>Q7Y4H2</accession>
<reference key="1">
    <citation type="journal article" date="2003" name="Nature">
        <title>Marine ecosystems: bacterial photosynthesis genes in a virus.</title>
        <authorList>
            <person name="Mann N.H."/>
            <person name="Cook A."/>
            <person name="Millard A."/>
            <person name="Bailey S."/>
            <person name="Clokie M."/>
        </authorList>
    </citation>
    <scope>NUCLEOTIDE SEQUENCE [GENOMIC DNA]</scope>
</reference>
<reference key="2">
    <citation type="journal article" date="2005" name="J. Bacteriol.">
        <title>The genome of S-PM2, a 'photosynthetic' T4-type bacteriophage that infects marine Synechococcus strains.</title>
        <authorList>
            <person name="Mann N.H."/>
            <person name="Clokie M.R."/>
            <person name="Millard A."/>
            <person name="Cook A."/>
            <person name="Wilson W.H."/>
            <person name="Wheatley P.J."/>
            <person name="Letarov A."/>
            <person name="Krisch H.M."/>
        </authorList>
    </citation>
    <scope>NUCLEOTIDE SEQUENCE [LARGE SCALE GENOMIC DNA]</scope>
</reference>
<name>PSBD_BPSYP</name>
<proteinExistence type="inferred from homology"/>